<comment type="function">
    <text evidence="1">Might take part in the signal recognition particle (SRP) pathway. This is inferred from the conservation of its genetic proximity to ftsY/ffh. May be a regulatory protein (By similarity).</text>
</comment>
<comment type="similarity">
    <text evidence="2">Belongs to the UPF0122 family.</text>
</comment>
<name>Y842_STRP3</name>
<dbReference type="EMBL" id="AE014074">
    <property type="protein sequence ID" value="AAM79449.1"/>
    <property type="molecule type" value="Genomic_DNA"/>
</dbReference>
<dbReference type="PDB" id="1S7O">
    <property type="method" value="X-ray"/>
    <property type="resolution" value="2.31 A"/>
    <property type="chains" value="A/B/C=1-113"/>
</dbReference>
<dbReference type="PDBsum" id="1S7O"/>
<dbReference type="SMR" id="P0DG80"/>
<dbReference type="KEGG" id="spg:SpyM3_0842"/>
<dbReference type="HOGENOM" id="CLU_129218_1_1_9"/>
<dbReference type="EvolutionaryTrace" id="P0DG80"/>
<dbReference type="Proteomes" id="UP000000564">
    <property type="component" value="Chromosome"/>
</dbReference>
<dbReference type="Gene3D" id="1.10.10.10">
    <property type="entry name" value="Winged helix-like DNA-binding domain superfamily/Winged helix DNA-binding domain"/>
    <property type="match status" value="1"/>
</dbReference>
<dbReference type="HAMAP" id="MF_00245">
    <property type="entry name" value="UPF0122"/>
    <property type="match status" value="1"/>
</dbReference>
<dbReference type="InterPro" id="IPR013324">
    <property type="entry name" value="RNA_pol_sigma_r3/r4-like"/>
</dbReference>
<dbReference type="InterPro" id="IPR007394">
    <property type="entry name" value="UPF0122"/>
</dbReference>
<dbReference type="InterPro" id="IPR054831">
    <property type="entry name" value="UPF0122_fam_protein"/>
</dbReference>
<dbReference type="InterPro" id="IPR036388">
    <property type="entry name" value="WH-like_DNA-bd_sf"/>
</dbReference>
<dbReference type="NCBIfam" id="NF001066">
    <property type="entry name" value="PRK00118.1-1"/>
    <property type="match status" value="1"/>
</dbReference>
<dbReference type="NCBIfam" id="NF001068">
    <property type="entry name" value="PRK00118.1-4"/>
    <property type="match status" value="1"/>
</dbReference>
<dbReference type="NCBIfam" id="NF001070">
    <property type="entry name" value="PRK00118.1-6"/>
    <property type="match status" value="1"/>
</dbReference>
<dbReference type="NCBIfam" id="NF045758">
    <property type="entry name" value="YlxM"/>
    <property type="match status" value="1"/>
</dbReference>
<dbReference type="PANTHER" id="PTHR40083">
    <property type="entry name" value="UPF0122 PROTEIN CBO2450/CLC_2298"/>
    <property type="match status" value="1"/>
</dbReference>
<dbReference type="PANTHER" id="PTHR40083:SF1">
    <property type="entry name" value="UPF0122 PROTEIN YLXM"/>
    <property type="match status" value="1"/>
</dbReference>
<dbReference type="Pfam" id="PF04297">
    <property type="entry name" value="UPF0122"/>
    <property type="match status" value="1"/>
</dbReference>
<dbReference type="SUPFAM" id="SSF88659">
    <property type="entry name" value="Sigma3 and sigma4 domains of RNA polymerase sigma factors"/>
    <property type="match status" value="1"/>
</dbReference>
<sequence length="113" mass="13590">MNIMEIEKTNRMNALFEFYAALLTDKQMNYIELYYADDYSLAEIADEFGVSRQAVYDNIKRTEKILETYEMKLHMYSDYVVRSEIFDDMIAHYPHDEYLQEKISILTSIDNRE</sequence>
<organism>
    <name type="scientific">Streptococcus pyogenes serotype M3 (strain ATCC BAA-595 / MGAS315)</name>
    <dbReference type="NCBI Taxonomy" id="198466"/>
    <lineage>
        <taxon>Bacteria</taxon>
        <taxon>Bacillati</taxon>
        <taxon>Bacillota</taxon>
        <taxon>Bacilli</taxon>
        <taxon>Lactobacillales</taxon>
        <taxon>Streptococcaceae</taxon>
        <taxon>Streptococcus</taxon>
    </lineage>
</organism>
<reference key="1">
    <citation type="journal article" date="2002" name="Proc. Natl. Acad. Sci. U.S.A.">
        <title>Genome sequence of a serotype M3 strain of group A Streptococcus: phage-encoded toxins, the high-virulence phenotype, and clone emergence.</title>
        <authorList>
            <person name="Beres S.B."/>
            <person name="Sylva G.L."/>
            <person name="Barbian K.D."/>
            <person name="Lei B."/>
            <person name="Hoff J.S."/>
            <person name="Mammarella N.D."/>
            <person name="Liu M.-Y."/>
            <person name="Smoot J.C."/>
            <person name="Porcella S.F."/>
            <person name="Parkins L.D."/>
            <person name="Campbell D.S."/>
            <person name="Smith T.M."/>
            <person name="McCormick J.K."/>
            <person name="Leung D.Y.M."/>
            <person name="Schlievert P.M."/>
            <person name="Musser J.M."/>
        </authorList>
    </citation>
    <scope>NUCLEOTIDE SEQUENCE [LARGE SCALE GENOMIC DNA]</scope>
    <source>
        <strain>ATCC BAA-595 / MGAS315</strain>
    </source>
</reference>
<keyword id="KW-0002">3D-structure</keyword>
<protein>
    <recommendedName>
        <fullName>UPF0122 protein SpyM3_0842</fullName>
    </recommendedName>
</protein>
<evidence type="ECO:0000250" key="1"/>
<evidence type="ECO:0000305" key="2"/>
<evidence type="ECO:0007829" key="3">
    <source>
        <dbReference type="PDB" id="1S7O"/>
    </source>
</evidence>
<gene>
    <name type="ordered locus">SpyM3_0842</name>
</gene>
<accession>P0DG80</accession>
<accession>P67254</accession>
<accession>Q99ZK0</accession>
<feature type="chain" id="PRO_0000211889" description="UPF0122 protein SpyM3_0842">
    <location>
        <begin position="1"/>
        <end position="113"/>
    </location>
</feature>
<feature type="helix" evidence="3">
    <location>
        <begin position="10"/>
        <end position="19"/>
    </location>
</feature>
<feature type="helix" evidence="3">
    <location>
        <begin position="20"/>
        <end position="22"/>
    </location>
</feature>
<feature type="helix" evidence="3">
    <location>
        <begin position="25"/>
        <end position="35"/>
    </location>
</feature>
<feature type="helix" evidence="3">
    <location>
        <begin position="41"/>
        <end position="48"/>
    </location>
</feature>
<feature type="helix" evidence="3">
    <location>
        <begin position="52"/>
        <end position="73"/>
    </location>
</feature>
<feature type="helix" evidence="3">
    <location>
        <begin position="75"/>
        <end position="92"/>
    </location>
</feature>
<feature type="helix" evidence="3">
    <location>
        <begin position="97"/>
        <end position="110"/>
    </location>
</feature>
<proteinExistence type="evidence at protein level"/>